<name>GCSPA_SACI2</name>
<dbReference type="EC" id="1.4.4.2" evidence="1"/>
<dbReference type="EMBL" id="CP001399">
    <property type="protein sequence ID" value="ACP35398.1"/>
    <property type="molecule type" value="Genomic_DNA"/>
</dbReference>
<dbReference type="RefSeq" id="WP_012711309.1">
    <property type="nucleotide sequence ID" value="NC_012589.1"/>
</dbReference>
<dbReference type="SMR" id="C3MPT5"/>
<dbReference type="GeneID" id="84061616"/>
<dbReference type="KEGG" id="sis:LS215_1390"/>
<dbReference type="HOGENOM" id="CLU_004620_0_2_2"/>
<dbReference type="OrthoDB" id="17655at2157"/>
<dbReference type="Proteomes" id="UP000001747">
    <property type="component" value="Chromosome"/>
</dbReference>
<dbReference type="GO" id="GO:0004375">
    <property type="term" value="F:glycine dehydrogenase (decarboxylating) activity"/>
    <property type="evidence" value="ECO:0007669"/>
    <property type="project" value="UniProtKB-EC"/>
</dbReference>
<dbReference type="GO" id="GO:0019464">
    <property type="term" value="P:glycine decarboxylation via glycine cleavage system"/>
    <property type="evidence" value="ECO:0007669"/>
    <property type="project" value="UniProtKB-UniRule"/>
</dbReference>
<dbReference type="GO" id="GO:0009116">
    <property type="term" value="P:nucleoside metabolic process"/>
    <property type="evidence" value="ECO:0007669"/>
    <property type="project" value="InterPro"/>
</dbReference>
<dbReference type="CDD" id="cd00613">
    <property type="entry name" value="GDC-P"/>
    <property type="match status" value="1"/>
</dbReference>
<dbReference type="Gene3D" id="3.90.1150.10">
    <property type="entry name" value="Aspartate Aminotransferase, domain 1"/>
    <property type="match status" value="1"/>
</dbReference>
<dbReference type="Gene3D" id="3.40.640.10">
    <property type="entry name" value="Type I PLP-dependent aspartate aminotransferase-like (Major domain)"/>
    <property type="match status" value="1"/>
</dbReference>
<dbReference type="HAMAP" id="MF_00712">
    <property type="entry name" value="GcvPA"/>
    <property type="match status" value="1"/>
</dbReference>
<dbReference type="InterPro" id="IPR023010">
    <property type="entry name" value="GcvPA"/>
</dbReference>
<dbReference type="InterPro" id="IPR049315">
    <property type="entry name" value="GDC-P_N"/>
</dbReference>
<dbReference type="InterPro" id="IPR020581">
    <property type="entry name" value="GDC_P"/>
</dbReference>
<dbReference type="InterPro" id="IPR015424">
    <property type="entry name" value="PyrdxlP-dep_Trfase"/>
</dbReference>
<dbReference type="InterPro" id="IPR015421">
    <property type="entry name" value="PyrdxlP-dep_Trfase_major"/>
</dbReference>
<dbReference type="InterPro" id="IPR015422">
    <property type="entry name" value="PyrdxlP-dep_Trfase_small"/>
</dbReference>
<dbReference type="NCBIfam" id="NF001696">
    <property type="entry name" value="PRK00451.1"/>
    <property type="match status" value="1"/>
</dbReference>
<dbReference type="PANTHER" id="PTHR42806">
    <property type="entry name" value="GLYCINE CLEAVAGE SYSTEM P-PROTEIN"/>
    <property type="match status" value="1"/>
</dbReference>
<dbReference type="PANTHER" id="PTHR42806:SF1">
    <property type="entry name" value="GLYCINE DEHYDROGENASE (DECARBOXYLATING)"/>
    <property type="match status" value="1"/>
</dbReference>
<dbReference type="Pfam" id="PF02347">
    <property type="entry name" value="GDC-P"/>
    <property type="match status" value="1"/>
</dbReference>
<dbReference type="PIRSF" id="PIRSF006815">
    <property type="entry name" value="GcvPA"/>
    <property type="match status" value="1"/>
</dbReference>
<dbReference type="SUPFAM" id="SSF53383">
    <property type="entry name" value="PLP-dependent transferases"/>
    <property type="match status" value="1"/>
</dbReference>
<protein>
    <recommendedName>
        <fullName evidence="1">Probable glycine dehydrogenase (decarboxylating) subunit 1</fullName>
        <ecNumber evidence="1">1.4.4.2</ecNumber>
    </recommendedName>
    <alternativeName>
        <fullName evidence="1">Glycine cleavage system P-protein subunit 1</fullName>
    </alternativeName>
    <alternativeName>
        <fullName evidence="1">Glycine decarboxylase subunit 1</fullName>
    </alternativeName>
    <alternativeName>
        <fullName evidence="1">Glycine dehydrogenase (aminomethyl-transferring) subunit 1</fullName>
    </alternativeName>
</protein>
<sequence length="455" mass="51276">MYKHPWLPNLDLIDEMLKEIGVNSLDELFNDIPAEIKINRLLNVAKGKPLSEYEIEKEINEKVKKNVELQAPPFIGAGICPHYIPNVVKFIIGRSEFYTSYTPYQPEISQGLLQALFEYQSLMAELLDMDVVNASMYDWGSALAEAVLMANRINGKKTVLVPENANPFHKEVVRTWIGGKGIKIEEVKYDKNSGELDLEDLEKKSNIDDISAIYIQQPNFFGIFESNIEHVIDVAKHKRALSIVGVNPLSLGLIKPPGSYEADIVVGDGQELGLPLNFGGPLMGVFAVRWDMSLVRQMPGRIVGITKDTNGKMGFTLILQTREQFIKREKATSNITTNEALLAIANAVYLSLLGKEGMRELAEEIYFRSHYAAKKLTEIDNVSMPFRSDFFEEFAIRFPIEYDKISNKLKERKLQGGLKLSDYTSLFCVTEVHDKKSIDLLVSTIQEMINGVETS</sequence>
<feature type="chain" id="PRO_1000212666" description="Probable glycine dehydrogenase (decarboxylating) subunit 1">
    <location>
        <begin position="1"/>
        <end position="455"/>
    </location>
</feature>
<evidence type="ECO:0000255" key="1">
    <source>
        <dbReference type="HAMAP-Rule" id="MF_00712"/>
    </source>
</evidence>
<accession>C3MPT5</accession>
<gene>
    <name evidence="1" type="primary">gcvPA</name>
    <name type="ordered locus">LS215_1390</name>
</gene>
<reference key="1">
    <citation type="journal article" date="2009" name="Proc. Natl. Acad. Sci. U.S.A.">
        <title>Biogeography of the Sulfolobus islandicus pan-genome.</title>
        <authorList>
            <person name="Reno M.L."/>
            <person name="Held N.L."/>
            <person name="Fields C.J."/>
            <person name="Burke P.V."/>
            <person name="Whitaker R.J."/>
        </authorList>
    </citation>
    <scope>NUCLEOTIDE SEQUENCE [LARGE SCALE GENOMIC DNA]</scope>
    <source>
        <strain>L.S.2.15 / Lassen #1</strain>
    </source>
</reference>
<proteinExistence type="inferred from homology"/>
<comment type="function">
    <text evidence="1">The glycine cleavage system catalyzes the degradation of glycine. The P protein binds the alpha-amino group of glycine through its pyridoxal phosphate cofactor; CO(2) is released and the remaining methylamine moiety is then transferred to the lipoamide cofactor of the H protein.</text>
</comment>
<comment type="catalytic activity">
    <reaction evidence="1">
        <text>N(6)-[(R)-lipoyl]-L-lysyl-[glycine-cleavage complex H protein] + glycine + H(+) = N(6)-[(R)-S(8)-aminomethyldihydrolipoyl]-L-lysyl-[glycine-cleavage complex H protein] + CO2</text>
        <dbReference type="Rhea" id="RHEA:24304"/>
        <dbReference type="Rhea" id="RHEA-COMP:10494"/>
        <dbReference type="Rhea" id="RHEA-COMP:10495"/>
        <dbReference type="ChEBI" id="CHEBI:15378"/>
        <dbReference type="ChEBI" id="CHEBI:16526"/>
        <dbReference type="ChEBI" id="CHEBI:57305"/>
        <dbReference type="ChEBI" id="CHEBI:83099"/>
        <dbReference type="ChEBI" id="CHEBI:83143"/>
        <dbReference type="EC" id="1.4.4.2"/>
    </reaction>
</comment>
<comment type="subunit">
    <text evidence="1">The glycine cleavage system is composed of four proteins: P, T, L and H. In this organism, the P 'protein' is a heterodimer of two subunits.</text>
</comment>
<comment type="similarity">
    <text evidence="1">Belongs to the GcvP family. N-terminal subunit subfamily.</text>
</comment>
<organism>
    <name type="scientific">Saccharolobus islandicus (strain L.S.2.15 / Lassen #1)</name>
    <name type="common">Sulfolobus islandicus</name>
    <dbReference type="NCBI Taxonomy" id="429572"/>
    <lineage>
        <taxon>Archaea</taxon>
        <taxon>Thermoproteota</taxon>
        <taxon>Thermoprotei</taxon>
        <taxon>Sulfolobales</taxon>
        <taxon>Sulfolobaceae</taxon>
        <taxon>Saccharolobus</taxon>
    </lineage>
</organism>
<keyword id="KW-0560">Oxidoreductase</keyword>